<keyword id="KW-0067">ATP-binding</keyword>
<keyword id="KW-0963">Cytoplasm</keyword>
<keyword id="KW-0227">DNA damage</keyword>
<keyword id="KW-0233">DNA recombination</keyword>
<keyword id="KW-0234">DNA repair</keyword>
<keyword id="KW-0238">DNA-binding</keyword>
<keyword id="KW-0378">Hydrolase</keyword>
<keyword id="KW-0547">Nucleotide-binding</keyword>
<keyword id="KW-1185">Reference proteome</keyword>
<gene>
    <name evidence="1" type="primary">ruvB</name>
    <name type="ordered locus">ELI_10425</name>
</gene>
<protein>
    <recommendedName>
        <fullName evidence="1">Holliday junction branch migration complex subunit RuvB</fullName>
        <ecNumber evidence="1">3.6.4.-</ecNumber>
    </recommendedName>
</protein>
<comment type="function">
    <text evidence="1">The RuvA-RuvB-RuvC complex processes Holliday junction (HJ) DNA during genetic recombination and DNA repair, while the RuvA-RuvB complex plays an important role in the rescue of blocked DNA replication forks via replication fork reversal (RFR). RuvA specifically binds to HJ cruciform DNA, conferring on it an open structure. The RuvB hexamer acts as an ATP-dependent pump, pulling dsDNA into and through the RuvAB complex. RuvB forms 2 homohexamers on either side of HJ DNA bound by 1 or 2 RuvA tetramers; 4 subunits per hexamer contact DNA at a time. Coordinated motions by a converter formed by DNA-disengaged RuvB subunits stimulates ATP hydrolysis and nucleotide exchange. Immobilization of the converter enables RuvB to convert the ATP-contained energy into a lever motion, pulling 2 nucleotides of DNA out of the RuvA tetramer per ATP hydrolyzed, thus driving DNA branch migration. The RuvB motors rotate together with the DNA substrate, which together with the progressing nucleotide cycle form the mechanistic basis for DNA recombination by continuous HJ branch migration. Branch migration allows RuvC to scan DNA until it finds its consensus sequence, where it cleaves and resolves cruciform DNA.</text>
</comment>
<comment type="catalytic activity">
    <reaction evidence="1">
        <text>ATP + H2O = ADP + phosphate + H(+)</text>
        <dbReference type="Rhea" id="RHEA:13065"/>
        <dbReference type="ChEBI" id="CHEBI:15377"/>
        <dbReference type="ChEBI" id="CHEBI:15378"/>
        <dbReference type="ChEBI" id="CHEBI:30616"/>
        <dbReference type="ChEBI" id="CHEBI:43474"/>
        <dbReference type="ChEBI" id="CHEBI:456216"/>
    </reaction>
</comment>
<comment type="subunit">
    <text evidence="1">Homohexamer. Forms an RuvA(8)-RuvB(12)-Holliday junction (HJ) complex. HJ DNA is sandwiched between 2 RuvA tetramers; dsDNA enters through RuvA and exits via RuvB. An RuvB hexamer assembles on each DNA strand where it exits the tetramer. Each RuvB hexamer is contacted by two RuvA subunits (via domain III) on 2 adjacent RuvB subunits; this complex drives branch migration. In the full resolvosome a probable DNA-RuvA(4)-RuvB(12)-RuvC(2) complex forms which resolves the HJ.</text>
</comment>
<comment type="subcellular location">
    <subcellularLocation>
        <location evidence="1">Cytoplasm</location>
    </subcellularLocation>
</comment>
<comment type="domain">
    <text evidence="1">Has 3 domains, the large (RuvB-L) and small ATPase (RuvB-S) domains and the C-terminal head (RuvB-H) domain. The head domain binds DNA, while the ATPase domains jointly bind ATP, ADP or are empty depending on the state of the subunit in the translocation cycle. During a single DNA translocation step the structure of each domain remains the same, but their relative positions change.</text>
</comment>
<comment type="similarity">
    <text evidence="1">Belongs to the RuvB family.</text>
</comment>
<sequence>MTDPIPLHTPDRQPEDPDVALRPKSLAEFVGQAAAKDNLAVFIEAARSRGEAMDHTLFFGPPGLGKTTLAQIIARELGVGFRATSGPVIAKAGDLAALLTNLEPHDVLFIDEIHRLNPVVEEVLYPAMEDRALDLIIGEGPAARSVRIDLPPFTLIGATTRQGLLTTPLRDRFGIPVRLNFYTEEELEKVVTRGAGLMGLAIDAAGAREIARRSRGTPRVAGRLLRRVRDFAEVQKAGTVTSPIADAALTRLEVDGLGLDAMDRRYLTMIADIYKGGPVGVETLAAGLAEPRDTIEDVVEPYLIQLGLVARTARGRCLNDRGWEHLERQPPAGSQTGLFDGKS</sequence>
<dbReference type="EC" id="3.6.4.-" evidence="1"/>
<dbReference type="EMBL" id="CP000157">
    <property type="protein sequence ID" value="ABC64177.1"/>
    <property type="molecule type" value="Genomic_DNA"/>
</dbReference>
<dbReference type="RefSeq" id="WP_011415004.1">
    <property type="nucleotide sequence ID" value="NC_007722.1"/>
</dbReference>
<dbReference type="SMR" id="Q2N814"/>
<dbReference type="STRING" id="314225.ELI_10425"/>
<dbReference type="KEGG" id="eli:ELI_10425"/>
<dbReference type="eggNOG" id="COG2255">
    <property type="taxonomic scope" value="Bacteria"/>
</dbReference>
<dbReference type="HOGENOM" id="CLU_055599_1_0_5"/>
<dbReference type="OrthoDB" id="9804478at2"/>
<dbReference type="Proteomes" id="UP000008808">
    <property type="component" value="Chromosome"/>
</dbReference>
<dbReference type="GO" id="GO:0005737">
    <property type="term" value="C:cytoplasm"/>
    <property type="evidence" value="ECO:0007669"/>
    <property type="project" value="UniProtKB-SubCell"/>
</dbReference>
<dbReference type="GO" id="GO:0048476">
    <property type="term" value="C:Holliday junction resolvase complex"/>
    <property type="evidence" value="ECO:0007669"/>
    <property type="project" value="UniProtKB-UniRule"/>
</dbReference>
<dbReference type="GO" id="GO:0005524">
    <property type="term" value="F:ATP binding"/>
    <property type="evidence" value="ECO:0007669"/>
    <property type="project" value="UniProtKB-UniRule"/>
</dbReference>
<dbReference type="GO" id="GO:0016887">
    <property type="term" value="F:ATP hydrolysis activity"/>
    <property type="evidence" value="ECO:0007669"/>
    <property type="project" value="InterPro"/>
</dbReference>
<dbReference type="GO" id="GO:0000400">
    <property type="term" value="F:four-way junction DNA binding"/>
    <property type="evidence" value="ECO:0007669"/>
    <property type="project" value="UniProtKB-UniRule"/>
</dbReference>
<dbReference type="GO" id="GO:0009378">
    <property type="term" value="F:four-way junction helicase activity"/>
    <property type="evidence" value="ECO:0007669"/>
    <property type="project" value="InterPro"/>
</dbReference>
<dbReference type="GO" id="GO:0006310">
    <property type="term" value="P:DNA recombination"/>
    <property type="evidence" value="ECO:0007669"/>
    <property type="project" value="UniProtKB-UniRule"/>
</dbReference>
<dbReference type="GO" id="GO:0006281">
    <property type="term" value="P:DNA repair"/>
    <property type="evidence" value="ECO:0007669"/>
    <property type="project" value="UniProtKB-UniRule"/>
</dbReference>
<dbReference type="CDD" id="cd00009">
    <property type="entry name" value="AAA"/>
    <property type="match status" value="1"/>
</dbReference>
<dbReference type="Gene3D" id="1.10.8.60">
    <property type="match status" value="1"/>
</dbReference>
<dbReference type="Gene3D" id="3.40.50.300">
    <property type="entry name" value="P-loop containing nucleotide triphosphate hydrolases"/>
    <property type="match status" value="1"/>
</dbReference>
<dbReference type="Gene3D" id="1.10.10.10">
    <property type="entry name" value="Winged helix-like DNA-binding domain superfamily/Winged helix DNA-binding domain"/>
    <property type="match status" value="1"/>
</dbReference>
<dbReference type="HAMAP" id="MF_00016">
    <property type="entry name" value="DNA_HJ_migration_RuvB"/>
    <property type="match status" value="1"/>
</dbReference>
<dbReference type="InterPro" id="IPR003593">
    <property type="entry name" value="AAA+_ATPase"/>
</dbReference>
<dbReference type="InterPro" id="IPR041445">
    <property type="entry name" value="AAA_lid_4"/>
</dbReference>
<dbReference type="InterPro" id="IPR004605">
    <property type="entry name" value="DNA_helicase_Holl-junc_RuvB"/>
</dbReference>
<dbReference type="InterPro" id="IPR027417">
    <property type="entry name" value="P-loop_NTPase"/>
</dbReference>
<dbReference type="InterPro" id="IPR008824">
    <property type="entry name" value="RuvB-like_N"/>
</dbReference>
<dbReference type="InterPro" id="IPR008823">
    <property type="entry name" value="RuvB_C"/>
</dbReference>
<dbReference type="InterPro" id="IPR036388">
    <property type="entry name" value="WH-like_DNA-bd_sf"/>
</dbReference>
<dbReference type="InterPro" id="IPR036390">
    <property type="entry name" value="WH_DNA-bd_sf"/>
</dbReference>
<dbReference type="NCBIfam" id="NF000868">
    <property type="entry name" value="PRK00080.1"/>
    <property type="match status" value="1"/>
</dbReference>
<dbReference type="NCBIfam" id="TIGR00635">
    <property type="entry name" value="ruvB"/>
    <property type="match status" value="1"/>
</dbReference>
<dbReference type="PANTHER" id="PTHR42848">
    <property type="match status" value="1"/>
</dbReference>
<dbReference type="PANTHER" id="PTHR42848:SF1">
    <property type="entry name" value="HOLLIDAY JUNCTION BRANCH MIGRATION COMPLEX SUBUNIT RUVB"/>
    <property type="match status" value="1"/>
</dbReference>
<dbReference type="Pfam" id="PF17864">
    <property type="entry name" value="AAA_lid_4"/>
    <property type="match status" value="1"/>
</dbReference>
<dbReference type="Pfam" id="PF05491">
    <property type="entry name" value="RuvB_C"/>
    <property type="match status" value="1"/>
</dbReference>
<dbReference type="Pfam" id="PF05496">
    <property type="entry name" value="RuvB_N"/>
    <property type="match status" value="1"/>
</dbReference>
<dbReference type="SMART" id="SM00382">
    <property type="entry name" value="AAA"/>
    <property type="match status" value="1"/>
</dbReference>
<dbReference type="SUPFAM" id="SSF52540">
    <property type="entry name" value="P-loop containing nucleoside triphosphate hydrolases"/>
    <property type="match status" value="1"/>
</dbReference>
<dbReference type="SUPFAM" id="SSF46785">
    <property type="entry name" value="Winged helix' DNA-binding domain"/>
    <property type="match status" value="1"/>
</dbReference>
<feature type="chain" id="PRO_1000001404" description="Holliday junction branch migration complex subunit RuvB">
    <location>
        <begin position="1"/>
        <end position="343"/>
    </location>
</feature>
<feature type="region of interest" description="Large ATPase domain (RuvB-L)" evidence="1">
    <location>
        <begin position="1"/>
        <end position="182"/>
    </location>
</feature>
<feature type="region of interest" description="Small ATPAse domain (RuvB-S)" evidence="1">
    <location>
        <begin position="183"/>
        <end position="253"/>
    </location>
</feature>
<feature type="region of interest" description="Head domain (RuvB-H)" evidence="1">
    <location>
        <begin position="256"/>
        <end position="343"/>
    </location>
</feature>
<feature type="binding site" evidence="1">
    <location>
        <position position="21"/>
    </location>
    <ligand>
        <name>ATP</name>
        <dbReference type="ChEBI" id="CHEBI:30616"/>
    </ligand>
</feature>
<feature type="binding site" evidence="1">
    <location>
        <position position="22"/>
    </location>
    <ligand>
        <name>ATP</name>
        <dbReference type="ChEBI" id="CHEBI:30616"/>
    </ligand>
</feature>
<feature type="binding site" evidence="1">
    <location>
        <position position="63"/>
    </location>
    <ligand>
        <name>ATP</name>
        <dbReference type="ChEBI" id="CHEBI:30616"/>
    </ligand>
</feature>
<feature type="binding site" evidence="1">
    <location>
        <position position="66"/>
    </location>
    <ligand>
        <name>ATP</name>
        <dbReference type="ChEBI" id="CHEBI:30616"/>
    </ligand>
</feature>
<feature type="binding site" evidence="1">
    <location>
        <position position="67"/>
    </location>
    <ligand>
        <name>ATP</name>
        <dbReference type="ChEBI" id="CHEBI:30616"/>
    </ligand>
</feature>
<feature type="binding site" evidence="1">
    <location>
        <position position="67"/>
    </location>
    <ligand>
        <name>Mg(2+)</name>
        <dbReference type="ChEBI" id="CHEBI:18420"/>
    </ligand>
</feature>
<feature type="binding site" evidence="1">
    <location>
        <position position="68"/>
    </location>
    <ligand>
        <name>ATP</name>
        <dbReference type="ChEBI" id="CHEBI:30616"/>
    </ligand>
</feature>
<feature type="binding site" evidence="1">
    <location>
        <position position="172"/>
    </location>
    <ligand>
        <name>ATP</name>
        <dbReference type="ChEBI" id="CHEBI:30616"/>
    </ligand>
</feature>
<feature type="binding site" evidence="1">
    <location>
        <position position="182"/>
    </location>
    <ligand>
        <name>ATP</name>
        <dbReference type="ChEBI" id="CHEBI:30616"/>
    </ligand>
</feature>
<feature type="binding site" evidence="1">
    <location>
        <position position="219"/>
    </location>
    <ligand>
        <name>ATP</name>
        <dbReference type="ChEBI" id="CHEBI:30616"/>
    </ligand>
</feature>
<feature type="binding site" evidence="1">
    <location>
        <position position="292"/>
    </location>
    <ligand>
        <name>DNA</name>
        <dbReference type="ChEBI" id="CHEBI:16991"/>
    </ligand>
</feature>
<feature type="binding site" evidence="1">
    <location>
        <position position="311"/>
    </location>
    <ligand>
        <name>DNA</name>
        <dbReference type="ChEBI" id="CHEBI:16991"/>
    </ligand>
</feature>
<feature type="binding site" evidence="1">
    <location>
        <position position="316"/>
    </location>
    <ligand>
        <name>DNA</name>
        <dbReference type="ChEBI" id="CHEBI:16991"/>
    </ligand>
</feature>
<accession>Q2N814</accession>
<proteinExistence type="inferred from homology"/>
<reference key="1">
    <citation type="journal article" date="2009" name="J. Bacteriol.">
        <title>Complete genome sequence of Erythrobacter litoralis HTCC2594.</title>
        <authorList>
            <person name="Oh H.M."/>
            <person name="Giovannoni S.J."/>
            <person name="Ferriera S."/>
            <person name="Johnson J."/>
            <person name="Cho J.C."/>
        </authorList>
    </citation>
    <scope>NUCLEOTIDE SEQUENCE [LARGE SCALE GENOMIC DNA]</scope>
    <source>
        <strain>HTCC2594</strain>
    </source>
</reference>
<name>RUVB_ERYLH</name>
<organism>
    <name type="scientific">Erythrobacter litoralis (strain HTCC2594)</name>
    <dbReference type="NCBI Taxonomy" id="314225"/>
    <lineage>
        <taxon>Bacteria</taxon>
        <taxon>Pseudomonadati</taxon>
        <taxon>Pseudomonadota</taxon>
        <taxon>Alphaproteobacteria</taxon>
        <taxon>Sphingomonadales</taxon>
        <taxon>Erythrobacteraceae</taxon>
        <taxon>Erythrobacter/Porphyrobacter group</taxon>
        <taxon>Erythrobacter</taxon>
    </lineage>
</organism>
<evidence type="ECO:0000255" key="1">
    <source>
        <dbReference type="HAMAP-Rule" id="MF_00016"/>
    </source>
</evidence>